<sequence length="136" mass="15105">MKRHILATVIASLVAAPAMALAAGNNILSVHILDQQTGKPAPGVEVVLEQKKDNGWTQLNTGHTDQDGRIKALWPEKAAAPGDYRVIFKTGQYFESKKLDTFFPEIPVEFHISKTNEHYHVPLLLSQYGYSTYRGS</sequence>
<dbReference type="EC" id="3.5.2.17"/>
<dbReference type="EMBL" id="AF060858">
    <property type="protein sequence ID" value="AAC33718.1"/>
    <property type="status" value="ALT_FRAME"/>
    <property type="molecule type" value="Genomic_DNA"/>
</dbReference>
<dbReference type="EMBL" id="AJ972893">
    <property type="protein sequence ID" value="CAI99863.1"/>
    <property type="molecule type" value="Genomic_DNA"/>
</dbReference>
<dbReference type="RefSeq" id="WP_000820358.1">
    <property type="nucleotide sequence ID" value="NZ_VDCP01000004.1"/>
</dbReference>
<dbReference type="PDB" id="2GPZ">
    <property type="method" value="X-ray"/>
    <property type="resolution" value="2.50 A"/>
    <property type="chains" value="A/C=27-136"/>
</dbReference>
<dbReference type="PDBsum" id="2GPZ"/>
<dbReference type="SMR" id="Q4VYA5"/>
<dbReference type="PATRIC" id="fig|98360.39.peg.3134"/>
<dbReference type="OMA" id="CSENQNY"/>
<dbReference type="BRENDA" id="3.5.2.17">
    <property type="organism ID" value="10258"/>
</dbReference>
<dbReference type="EvolutionaryTrace" id="Q4VYA5"/>
<dbReference type="GO" id="GO:0042597">
    <property type="term" value="C:periplasmic space"/>
    <property type="evidence" value="ECO:0007669"/>
    <property type="project" value="UniProtKB-SubCell"/>
</dbReference>
<dbReference type="GO" id="GO:0033971">
    <property type="term" value="F:hydroxyisourate hydrolase activity"/>
    <property type="evidence" value="ECO:0007669"/>
    <property type="project" value="UniProtKB-EC"/>
</dbReference>
<dbReference type="GO" id="GO:0006144">
    <property type="term" value="P:purine nucleobase metabolic process"/>
    <property type="evidence" value="ECO:0007669"/>
    <property type="project" value="UniProtKB-KW"/>
</dbReference>
<dbReference type="CDD" id="cd05822">
    <property type="entry name" value="TLP_HIUase"/>
    <property type="match status" value="1"/>
</dbReference>
<dbReference type="FunFam" id="2.60.40.180:FF:000001">
    <property type="entry name" value="5-hydroxyisourate hydrolase"/>
    <property type="match status" value="1"/>
</dbReference>
<dbReference type="Gene3D" id="2.60.40.180">
    <property type="entry name" value="Transthyretin/hydroxyisourate hydrolase domain"/>
    <property type="match status" value="1"/>
</dbReference>
<dbReference type="InterPro" id="IPR014306">
    <property type="entry name" value="Hydroxyisourate_hydrolase"/>
</dbReference>
<dbReference type="InterPro" id="IPR023418">
    <property type="entry name" value="Thyroxine_BS"/>
</dbReference>
<dbReference type="InterPro" id="IPR000895">
    <property type="entry name" value="Transthyretin/HIU_hydrolase"/>
</dbReference>
<dbReference type="InterPro" id="IPR023416">
    <property type="entry name" value="Transthyretin/HIU_hydrolase_d"/>
</dbReference>
<dbReference type="InterPro" id="IPR036817">
    <property type="entry name" value="Transthyretin/HIU_hydrolase_sf"/>
</dbReference>
<dbReference type="InterPro" id="IPR023419">
    <property type="entry name" value="Transthyretin_CS"/>
</dbReference>
<dbReference type="NCBIfam" id="TIGR02962">
    <property type="entry name" value="hdxy_isourate"/>
    <property type="match status" value="1"/>
</dbReference>
<dbReference type="NCBIfam" id="NF011610">
    <property type="entry name" value="PRK15036.1"/>
    <property type="match status" value="1"/>
</dbReference>
<dbReference type="PANTHER" id="PTHR10395:SF7">
    <property type="entry name" value="5-HYDROXYISOURATE HYDROLASE"/>
    <property type="match status" value="1"/>
</dbReference>
<dbReference type="PANTHER" id="PTHR10395">
    <property type="entry name" value="URICASE AND TRANSTHYRETIN-RELATED"/>
    <property type="match status" value="1"/>
</dbReference>
<dbReference type="Pfam" id="PF00576">
    <property type="entry name" value="Transthyretin"/>
    <property type="match status" value="1"/>
</dbReference>
<dbReference type="PRINTS" id="PR00189">
    <property type="entry name" value="TRNSTHYRETIN"/>
</dbReference>
<dbReference type="SMART" id="SM00095">
    <property type="entry name" value="TR_THY"/>
    <property type="match status" value="1"/>
</dbReference>
<dbReference type="SUPFAM" id="SSF49472">
    <property type="entry name" value="Transthyretin (synonym: prealbumin)"/>
    <property type="match status" value="1"/>
</dbReference>
<dbReference type="PROSITE" id="PS00768">
    <property type="entry name" value="TRANSTHYRETIN_1"/>
    <property type="match status" value="1"/>
</dbReference>
<dbReference type="PROSITE" id="PS00769">
    <property type="entry name" value="TRANSTHYRETIN_2"/>
    <property type="match status" value="1"/>
</dbReference>
<feature type="signal peptide" evidence="2">
    <location>
        <begin position="1"/>
        <end position="22"/>
    </location>
</feature>
<feature type="chain" id="PRO_5000074934" description="5-hydroxyisourate hydrolase">
    <location>
        <begin position="23"/>
        <end position="136"/>
    </location>
</feature>
<feature type="binding site" evidence="1">
    <location>
        <position position="31"/>
    </location>
    <ligand>
        <name>substrate</name>
    </ligand>
</feature>
<feature type="binding site" evidence="1">
    <location>
        <position position="69"/>
    </location>
    <ligand>
        <name>substrate</name>
    </ligand>
</feature>
<feature type="binding site" evidence="1">
    <location>
        <position position="133"/>
    </location>
    <ligand>
        <name>substrate</name>
    </ligand>
</feature>
<feature type="mutagenesis site" description="Loss of activity." evidence="3">
    <original>H</original>
    <variation>A</variation>
    <location>
        <position position="31"/>
    </location>
</feature>
<feature type="mutagenesis site" description="Reduces activity by 90%." evidence="3">
    <original>H</original>
    <variation>A</variation>
    <location>
        <position position="120"/>
    </location>
</feature>
<feature type="mutagenesis site" description="Reduces activity by 90%." evidence="3">
    <original>Y</original>
    <variation>F</variation>
    <location>
        <position position="133"/>
    </location>
</feature>
<feature type="strand" evidence="5">
    <location>
        <begin position="27"/>
        <end position="34"/>
    </location>
</feature>
<feature type="turn" evidence="5">
    <location>
        <begin position="35"/>
        <end position="38"/>
    </location>
</feature>
<feature type="strand" evidence="5">
    <location>
        <begin position="45"/>
        <end position="51"/>
    </location>
</feature>
<feature type="strand" evidence="5">
    <location>
        <begin position="56"/>
        <end position="63"/>
    </location>
</feature>
<feature type="strand" evidence="5">
    <location>
        <begin position="68"/>
        <end position="71"/>
    </location>
</feature>
<feature type="strand" evidence="5">
    <location>
        <begin position="82"/>
        <end position="88"/>
    </location>
</feature>
<feature type="helix" evidence="5">
    <location>
        <begin position="90"/>
        <end position="96"/>
    </location>
</feature>
<feature type="strand" evidence="5">
    <location>
        <begin position="106"/>
        <end position="113"/>
    </location>
</feature>
<feature type="strand" evidence="5">
    <location>
        <begin position="117"/>
        <end position="120"/>
    </location>
</feature>
<feature type="strand" evidence="5">
    <location>
        <begin position="123"/>
        <end position="126"/>
    </location>
</feature>
<feature type="strand" evidence="5">
    <location>
        <begin position="129"/>
        <end position="132"/>
    </location>
</feature>
<keyword id="KW-0002">3D-structure</keyword>
<keyword id="KW-0903">Direct protein sequencing</keyword>
<keyword id="KW-0378">Hydrolase</keyword>
<keyword id="KW-0574">Periplasm</keyword>
<keyword id="KW-0659">Purine metabolism</keyword>
<keyword id="KW-0732">Signal</keyword>
<comment type="function">
    <text>Catalyzes the hydrolysis of 5-hydroxyisourate (HIU) to 2-oxo-4-hydroxy-4-carboxy-5-ureidoimidazoline (OHCU).</text>
</comment>
<comment type="catalytic activity">
    <reaction evidence="3">
        <text>5-hydroxyisourate + H2O = 5-hydroxy-2-oxo-4-ureido-2,5-dihydro-1H-imidazole-5-carboxylate + H(+)</text>
        <dbReference type="Rhea" id="RHEA:23736"/>
        <dbReference type="ChEBI" id="CHEBI:15377"/>
        <dbReference type="ChEBI" id="CHEBI:15378"/>
        <dbReference type="ChEBI" id="CHEBI:18072"/>
        <dbReference type="ChEBI" id="CHEBI:58639"/>
        <dbReference type="EC" id="3.5.2.17"/>
    </reaction>
</comment>
<comment type="subunit">
    <text evidence="2 3">Homotetramer.</text>
</comment>
<comment type="subcellular location">
    <subcellularLocation>
        <location evidence="2">Periplasm</location>
    </subcellularLocation>
</comment>
<comment type="mass spectrometry" mass="12872.0" method="Electrospray" evidence="2"/>
<comment type="miscellaneous">
    <text>Despite its homology to transthyretins, is not able to bind to the thyroid hormones thyroxine (T4) and triiodothyronine (T3).</text>
</comment>
<comment type="miscellaneous">
    <text>HIU hydrolysis also occurs spontaneously, but more slowly.</text>
</comment>
<comment type="similarity">
    <text evidence="4">Belongs to the transthyretin family. 5-hydroxyisourate hydrolase subfamily.</text>
</comment>
<comment type="sequence caution" evidence="4">
    <conflict type="frameshift">
        <sequence resource="EMBL-CDS" id="AAC33718"/>
    </conflict>
</comment>
<reference key="1">
    <citation type="journal article" date="1998" name="Mol. Microbiol.">
        <title>Identification of a pathogenicity island required for Salmonella enteropathogenicity.</title>
        <authorList>
            <person name="Wood M.W."/>
            <person name="Jones M.A."/>
            <person name="Watson P.R."/>
            <person name="Hedges S."/>
            <person name="Wallis T.S."/>
            <person name="Galyov E.E."/>
        </authorList>
    </citation>
    <scope>NUCLEOTIDE SEQUENCE [GENOMIC DNA]</scope>
    <source>
        <strain>2229</strain>
    </source>
</reference>
<reference key="2">
    <citation type="journal article" date="2006" name="Proteins">
        <title>Structural and functional evolution of transthyretin and transthyretin-like proteins.</title>
        <authorList>
            <person name="Hennebry S.C."/>
            <person name="Wright H.M."/>
            <person name="Likic V.A."/>
            <person name="Richardson S.J."/>
        </authorList>
    </citation>
    <scope>NUCLEOTIDE SEQUENCE [GENOMIC DNA]</scope>
    <scope>PROTEIN SEQUENCE OF 23-30</scope>
    <scope>LACK OF THYROID HORMONE BINDING</scope>
    <scope>SUBUNIT</scope>
    <scope>SUBCELLULAR LOCATION</scope>
    <scope>MASS SPECTROMETRY</scope>
</reference>
<reference key="3">
    <citation type="journal article" date="2006" name="J. Mol. Biol.">
        <title>The crystal structure of the transthyretin-like protein from Salmonella dublin, a prokaryote 5-hydroxyisourate hydrolase.</title>
        <authorList>
            <person name="Hennebry S.C."/>
            <person name="Law R.H.P."/>
            <person name="Richardson S.J."/>
            <person name="Buckle A.M."/>
            <person name="Whisstock J.C."/>
        </authorList>
    </citation>
    <scope>X-RAY CRYSTALLOGRAPHY (2.5 ANGSTROMS) OF 27-136</scope>
    <scope>CATALYTIC ACTIVITY</scope>
    <scope>SUBUNIT</scope>
    <scope>MUTAGENESIS OF HIS-31; HIS-120 AND TYR-133</scope>
</reference>
<protein>
    <recommendedName>
        <fullName>5-hydroxyisourate hydrolase</fullName>
        <shortName>HIU hydrolase</shortName>
        <shortName>HIUHase</shortName>
        <ecNumber>3.5.2.17</ecNumber>
    </recommendedName>
    <alternativeName>
        <fullName>Transthyretin-like protein</fullName>
        <shortName>TLP</shortName>
    </alternativeName>
    <alternativeName>
        <fullName>Transthyretin-related protein</fullName>
        <shortName>TRP</shortName>
    </alternativeName>
</protein>
<accession>Q4VYA5</accession>
<accession>O85301</accession>
<name>HIUH_SALDU</name>
<evidence type="ECO:0000250" key="1"/>
<evidence type="ECO:0000269" key="2">
    <source>
    </source>
</evidence>
<evidence type="ECO:0000269" key="3">
    <source>
    </source>
</evidence>
<evidence type="ECO:0000305" key="4"/>
<evidence type="ECO:0007829" key="5">
    <source>
        <dbReference type="PDB" id="2GPZ"/>
    </source>
</evidence>
<organism>
    <name type="scientific">Salmonella dublin</name>
    <dbReference type="NCBI Taxonomy" id="98360"/>
    <lineage>
        <taxon>Bacteria</taxon>
        <taxon>Pseudomonadati</taxon>
        <taxon>Pseudomonadota</taxon>
        <taxon>Gammaproteobacteria</taxon>
        <taxon>Enterobacterales</taxon>
        <taxon>Enterobacteriaceae</taxon>
        <taxon>Salmonella</taxon>
    </lineage>
</organism>
<proteinExistence type="evidence at protein level"/>
<gene>
    <name type="primary">hiuH</name>
    <name type="synonym">yedX</name>
</gene>